<evidence type="ECO:0000250" key="1"/>
<evidence type="ECO:0000250" key="2">
    <source>
        <dbReference type="UniProtKB" id="Q9CPW0"/>
    </source>
</evidence>
<evidence type="ECO:0000255" key="3"/>
<evidence type="ECO:0000255" key="4">
    <source>
        <dbReference type="PROSITE-ProRule" id="PRU00076"/>
    </source>
</evidence>
<evidence type="ECO:0000255" key="5">
    <source>
        <dbReference type="PROSITE-ProRule" id="PRU00081"/>
    </source>
</evidence>
<evidence type="ECO:0000255" key="6">
    <source>
        <dbReference type="PROSITE-ProRule" id="PRU00122"/>
    </source>
</evidence>
<evidence type="ECO:0000255" key="7">
    <source>
        <dbReference type="PROSITE-ProRule" id="PRU00739"/>
    </source>
</evidence>
<evidence type="ECO:0000256" key="8">
    <source>
        <dbReference type="SAM" id="MobiDB-lite"/>
    </source>
</evidence>
<evidence type="ECO:0000269" key="9">
    <source>
    </source>
</evidence>
<evidence type="ECO:0000269" key="10">
    <source>
    </source>
</evidence>
<evidence type="ECO:0000269" key="11">
    <source>
    </source>
</evidence>
<evidence type="ECO:0000269" key="12">
    <source>
    </source>
</evidence>
<evidence type="ECO:0000269" key="13">
    <source>
    </source>
</evidence>
<evidence type="ECO:0000303" key="14">
    <source>
    </source>
</evidence>
<evidence type="ECO:0000303" key="15">
    <source>
    </source>
</evidence>
<evidence type="ECO:0000305" key="16"/>
<evidence type="ECO:0000305" key="17">
    <source>
    </source>
</evidence>
<evidence type="ECO:0007829" key="18">
    <source>
        <dbReference type="PDB" id="5Y4M"/>
    </source>
</evidence>
<gene>
    <name type="primary">CNTNAP2</name>
    <name evidence="14" type="synonym">CASPR2</name>
    <name type="synonym">KIAA0868</name>
</gene>
<sequence length="1331" mass="148167">MQAAPRAGCGAALLLWIVSSCLCRAWTAPSTSQKCDEPLVSGLPHVAFSSSSSISGSYSPGYAKINKRGGAGGWSPSDSDHYQWLQVDFGNRKQISAIATQGRYSSSDWVTQYRMLYSDTGRNWKPYHQDGNIWAFPGNINSDGVVRHELQHPIIARYVRIVPLDWNGEGRIGLRIEVYGCSYWADVINFDGHVVLPYRFRNKKMKTLKDVIALNFKTSESEGVILHGEGQQGDYITLELKKAKLVLSLNLGSNQLGPIYGHTSVMTGSLLDDHHWHSVVIERQGRSINLTLDRSMQHFRTNGEFDYLDLDYEITFGGIPFSGKPSSSSRKNFKGCMESINYNGVNITDLARRKKLEPSNVGNLSFSCVEPYTVPVFFNATSYLEVPGRLNQDLFSVSFQFRTWNPNGLLVFSHFADNLGNVEIDLTESKVGVHINITQTKMSQIDISSGSGLNDGQWHEVRFLAKENFAILTIDGDEASAVRTNSPLQVKTGEKYFFGGFLNQMNNSSHSVLQPSFQGCMQLIQVDDQLVNLYEVAQRKPGSFANVSIDMCAIIDRCVPNHCEHGGKCSQTWDSFKCTCDETGYSGATCHNSIYEPSCEAYKHLGQTSNYYWIDPDGSGPLGPLKVYCNMTEDKVWTIVSHDLQMQTPVVGYNPEKYSVTQLVYSASMDQISAITDSAEYCEQYVSYFCKMSRLLNTPDGSPYTWWVGKANEKHYYWGGSGPGIQKCACGIERNCTDPKYYCNCDADYKQWRKDAGFLSYKDHLPVSQVVVGDTDRQGSEAKLSVGPLRCQGDRNYWNAASFPNPSSYLHFSTFQGETSADISFYFKTLTPWGVFLENMGKEDFIKLELKSATEVSFSFDVGNGPVEIVVRSPTPLNDDQWHRVTAERNVKQASLQVDRLPQQIRKAPTEGHTRLELYSQLFVGGAGGQQGFLGCIRSLRMNGVTLDLEERAKVTSGFISGCSGHCTSYGTNCENGGKCLERYHGYSCDCSNTAYDGTFCNKDVGAFFEEGMWLRYNFQAPATNARDSSSRVDNAPDQQNSHPDLAQEEIRFSFSTTKAPCILLYISSFTTDFLAVLVKPTGSLQIRYNLGGTREPYNIDVDHRNMANGQPHSVNITRHEKTIFLKLDHYPSVSYHLPSSSDTLFNSPKSLFLGKVIETGKIDQEIHKYNTPGFTGCLSRVQFNQIAPLKAALRQTNASAHVHIQGELVESNCGASPLTLSPMSSATDPWHLDHLDSASADFPYNPGQGQAIRNGVNRNSAIIGGVIAVVIFTILCTLVFLIRYMFRHKGTYHTNEAKGAESAESADAAIMNNDPNFTETIDESKKEWLI</sequence>
<organism>
    <name type="scientific">Homo sapiens</name>
    <name type="common">Human</name>
    <dbReference type="NCBI Taxonomy" id="9606"/>
    <lineage>
        <taxon>Eukaryota</taxon>
        <taxon>Metazoa</taxon>
        <taxon>Chordata</taxon>
        <taxon>Craniata</taxon>
        <taxon>Vertebrata</taxon>
        <taxon>Euteleostomi</taxon>
        <taxon>Mammalia</taxon>
        <taxon>Eutheria</taxon>
        <taxon>Euarchontoglires</taxon>
        <taxon>Primates</taxon>
        <taxon>Haplorrhini</taxon>
        <taxon>Catarrhini</taxon>
        <taxon>Hominidae</taxon>
        <taxon>Homo</taxon>
    </lineage>
</organism>
<keyword id="KW-0002">3D-structure</keyword>
<keyword id="KW-0025">Alternative splicing</keyword>
<keyword id="KW-1269">Autism</keyword>
<keyword id="KW-1268">Autism spectrum disorder</keyword>
<keyword id="KW-0130">Cell adhesion</keyword>
<keyword id="KW-0965">Cell junction</keyword>
<keyword id="KW-0966">Cell projection</keyword>
<keyword id="KW-0160">Chromosomal rearrangement</keyword>
<keyword id="KW-1015">Disulfide bond</keyword>
<keyword id="KW-0245">EGF-like domain</keyword>
<keyword id="KW-0887">Epilepsy</keyword>
<keyword id="KW-0325">Glycoprotein</keyword>
<keyword id="KW-0991">Intellectual disability</keyword>
<keyword id="KW-0472">Membrane</keyword>
<keyword id="KW-0597">Phosphoprotein</keyword>
<keyword id="KW-1267">Proteomics identification</keyword>
<keyword id="KW-1185">Reference proteome</keyword>
<keyword id="KW-0677">Repeat</keyword>
<keyword id="KW-0732">Signal</keyword>
<keyword id="KW-0812">Transmembrane</keyword>
<keyword id="KW-1133">Transmembrane helix</keyword>
<comment type="function">
    <text evidence="2 17">Required for gap junction formation (Probable). Required, with CNTNAP1, for radial and longitudinal organization of myelinated axons. Plays a role in the formation of functional distinct domains critical for saltatory conduction of nerve impulses in myelinated nerve fibers. Demarcates the juxtaparanodal region of the axo-glial junction.</text>
</comment>
<comment type="subunit">
    <text evidence="9 13">Interacts (via C-terminus) with KCNA2 (PubMed:10624965). Interacts with GPR37 (PubMed:25977097).</text>
</comment>
<comment type="interaction">
    <interactant intactId="EBI-310892">
        <id>Q9UHC6</id>
    </interactant>
    <interactant intactId="EBI-5564336">
        <id>Q12860</id>
        <label>CNTN1</label>
    </interactant>
    <organismsDiffer>false</organismsDiffer>
    <experiments>5</experiments>
</comment>
<comment type="interaction">
    <interactant intactId="EBI-310892">
        <id>Q9UHC6</id>
    </interactant>
    <interactant intactId="EBI-739467">
        <id>Q9H8Y8</id>
        <label>GORASP2</label>
    </interactant>
    <organismsDiffer>false</organismsDiffer>
    <experiments>3</experiments>
</comment>
<comment type="interaction">
    <interactant intactId="EBI-310892">
        <id>Q9UHC6</id>
    </interactant>
    <interactant intactId="EBI-748397">
        <id>P50222</id>
        <label>MEOX2</label>
    </interactant>
    <organismsDiffer>false</organismsDiffer>
    <experiments>3</experiments>
</comment>
<comment type="interaction">
    <interactant intactId="EBI-310892">
        <id>Q9UHC6</id>
    </interactant>
    <interactant intactId="EBI-347928">
        <id>P62487</id>
        <label>POLR2G</label>
    </interactant>
    <organismsDiffer>false</organismsDiffer>
    <experiments>3</experiments>
</comment>
<comment type="interaction">
    <interactant intactId="EBI-16594440">
        <id>Q9UHC6-1</id>
    </interactant>
    <interactant intactId="EBI-355947">
        <id>P27824</id>
        <label>CANX</label>
    </interactant>
    <organismsDiffer>false</organismsDiffer>
    <experiments>2</experiments>
</comment>
<comment type="subcellular location">
    <subcellularLocation>
        <location evidence="2">Membrane</location>
        <topology evidence="16">Single-pass type I membrane protein</topology>
    </subcellularLocation>
    <subcellularLocation>
        <location evidence="2">Cell projection</location>
        <location evidence="2">Axon</location>
    </subcellularLocation>
    <subcellularLocation>
        <location evidence="2">Cell junction</location>
        <location evidence="2">Paranodal septate junction</location>
    </subcellularLocation>
    <text evidence="2">Expressed in the juxtaparadonal region.</text>
</comment>
<comment type="alternative products">
    <event type="alternative splicing"/>
    <isoform>
        <id>Q9UHC6-1</id>
        <name>1</name>
        <sequence type="displayed"/>
    </isoform>
    <isoform>
        <id>Q9UHC6-2</id>
        <name>2</name>
        <sequence type="described" ref="VSP_014976"/>
    </isoform>
</comment>
<comment type="tissue specificity">
    <text evidence="9">Predominantly expressed in nervous system.</text>
</comment>
<comment type="disease" evidence="11">
    <disease id="DI-02792">
        <name>Autism 15</name>
        <acronym>AUTS15</acronym>
        <description>A complex multifactorial, pervasive developmental disorder characterized by impairments in reciprocal social interaction and communication, restricted and stereotyped patterns of interests and activities, and the presence of developmental abnormalities by 3 years of age. Most individuals with autism also manifest moderate intellectual disability.</description>
        <dbReference type="MIM" id="612100"/>
    </disease>
    <text>Disease susceptibility is associated with variants affecting the gene represented in this entry.</text>
</comment>
<comment type="disease">
    <text>A chromosomal aberration involving CNTNAP2 is found in a patient with autism spectrum disorder. Paracentric inversion 46,XY,inv(7)(q11.22;q35). The inversion breakpoints disrupt the genes AUTS2 and CNTNAP2.</text>
</comment>
<comment type="disease" evidence="10 12">
    <disease id="DI-03300">
        <name>Pitt-Hopkins-like syndrome 1</name>
        <acronym>PTHSL1</acronym>
        <description>A syndrome characterized by severe intellectual disability and variable additional symptoms, such as impaired speech development, seizures, autistic behavior, breathing anomalies and a broad mouth, resembling Pitt-Hopkins syndrome. In contrast to patients with Pitt-Hopkins syndrome, PTHSL1 patients present with normal or only mildly to moderately delayed motor milestones.</description>
        <dbReference type="MIM" id="610042"/>
    </disease>
    <text>The disease is caused by variants affecting the gene represented in this entry.</text>
</comment>
<comment type="similarity">
    <text evidence="16">Belongs to the neurexin family.</text>
</comment>
<comment type="sequence caution" evidence="16">
    <conflict type="erroneous initiation">
        <sequence resource="EMBL-CDS" id="BAA74891"/>
    </conflict>
    <text>Extended N-terminus.</text>
</comment>
<feature type="signal peptide" evidence="3">
    <location>
        <begin position="1"/>
        <end position="27"/>
    </location>
</feature>
<feature type="chain" id="PRO_0000019506" description="Contactin-associated protein-like 2">
    <location>
        <begin position="28"/>
        <end position="1331"/>
    </location>
</feature>
<feature type="topological domain" description="Extracellular" evidence="3">
    <location>
        <begin position="28"/>
        <end position="1262"/>
    </location>
</feature>
<feature type="transmembrane region" description="Helical" evidence="3">
    <location>
        <begin position="1263"/>
        <end position="1283"/>
    </location>
</feature>
<feature type="topological domain" description="Cytoplasmic" evidence="3">
    <location>
        <begin position="1284"/>
        <end position="1331"/>
    </location>
</feature>
<feature type="domain" description="F5/8 type C" evidence="5">
    <location>
        <begin position="35"/>
        <end position="181"/>
    </location>
</feature>
<feature type="domain" description="Laminin G-like 1" evidence="6">
    <location>
        <begin position="216"/>
        <end position="368"/>
    </location>
</feature>
<feature type="domain" description="Laminin G-like 2" evidence="6">
    <location>
        <begin position="401"/>
        <end position="552"/>
    </location>
</feature>
<feature type="domain" description="EGF-like 1" evidence="4">
    <location>
        <begin position="554"/>
        <end position="591"/>
    </location>
</feature>
<feature type="domain" description="Fibrinogen C-terminal" evidence="7">
    <location>
        <begin position="592"/>
        <end position="798"/>
    </location>
</feature>
<feature type="domain" description="Laminin G-like 3" evidence="6">
    <location>
        <begin position="799"/>
        <end position="963"/>
    </location>
</feature>
<feature type="domain" description="EGF-like 2" evidence="4">
    <location>
        <begin position="963"/>
        <end position="1002"/>
    </location>
</feature>
<feature type="domain" description="Laminin G-like 4" evidence="6">
    <location>
        <begin position="1055"/>
        <end position="1214"/>
    </location>
</feature>
<feature type="region of interest" description="Disordered" evidence="8">
    <location>
        <begin position="1026"/>
        <end position="1045"/>
    </location>
</feature>
<feature type="modified residue" description="Phosphoserine" evidence="2">
    <location>
        <position position="1303"/>
    </location>
</feature>
<feature type="modified residue" description="Phosphoserine" evidence="2">
    <location>
        <position position="1306"/>
    </location>
</feature>
<feature type="glycosylation site" description="N-linked (GlcNAc...) asparagine" evidence="3">
    <location>
        <position position="289"/>
    </location>
</feature>
<feature type="glycosylation site" description="N-linked (GlcNAc...) asparagine" evidence="3">
    <location>
        <position position="346"/>
    </location>
</feature>
<feature type="glycosylation site" description="N-linked (GlcNAc...) asparagine" evidence="3">
    <location>
        <position position="363"/>
    </location>
</feature>
<feature type="glycosylation site" description="N-linked (GlcNAc...) asparagine" evidence="3">
    <location>
        <position position="379"/>
    </location>
</feature>
<feature type="glycosylation site" description="N-linked (GlcNAc...) asparagine" evidence="3">
    <location>
        <position position="436"/>
    </location>
</feature>
<feature type="glycosylation site" description="N-linked (GlcNAc...) asparagine" evidence="3">
    <location>
        <position position="506"/>
    </location>
</feature>
<feature type="glycosylation site" description="N-linked (GlcNAc...) asparagine" evidence="3">
    <location>
        <position position="507"/>
    </location>
</feature>
<feature type="glycosylation site" description="N-linked (GlcNAc...) asparagine" evidence="3">
    <location>
        <position position="546"/>
    </location>
</feature>
<feature type="glycosylation site" description="N-linked (GlcNAc...) asparagine" evidence="3">
    <location>
        <position position="630"/>
    </location>
</feature>
<feature type="glycosylation site" description="N-linked (GlcNAc...) asparagine" evidence="3">
    <location>
        <position position="735"/>
    </location>
</feature>
<feature type="glycosylation site" description="N-linked (GlcNAc...) asparagine" evidence="3">
    <location>
        <position position="1116"/>
    </location>
</feature>
<feature type="glycosylation site" description="N-linked (GlcNAc...) asparagine" evidence="3">
    <location>
        <position position="1198"/>
    </location>
</feature>
<feature type="disulfide bond" evidence="1">
    <location>
        <begin position="35"/>
        <end position="181"/>
    </location>
</feature>
<feature type="disulfide bond" evidence="1">
    <location>
        <begin position="336"/>
        <end position="368"/>
    </location>
</feature>
<feature type="disulfide bond" evidence="1">
    <location>
        <begin position="520"/>
        <end position="552"/>
    </location>
</feature>
<feature type="disulfide bond" evidence="1">
    <location>
        <begin position="558"/>
        <end position="569"/>
    </location>
</feature>
<feature type="disulfide bond" evidence="1">
    <location>
        <begin position="563"/>
        <end position="578"/>
    </location>
</feature>
<feature type="disulfide bond" evidence="1">
    <location>
        <begin position="580"/>
        <end position="590"/>
    </location>
</feature>
<feature type="disulfide bond" evidence="1">
    <location>
        <begin position="936"/>
        <end position="963"/>
    </location>
</feature>
<feature type="disulfide bond" evidence="1">
    <location>
        <begin position="967"/>
        <end position="980"/>
    </location>
</feature>
<feature type="disulfide bond" evidence="1">
    <location>
        <begin position="974"/>
        <end position="989"/>
    </location>
</feature>
<feature type="disulfide bond" evidence="1">
    <location>
        <begin position="991"/>
        <end position="1001"/>
    </location>
</feature>
<feature type="disulfide bond" evidence="1">
    <location>
        <begin position="1178"/>
        <end position="1214"/>
    </location>
</feature>
<feature type="splice variant" id="VSP_014976" description="In isoform 2." evidence="15">
    <location>
        <begin position="1"/>
        <end position="1223"/>
    </location>
</feature>
<feature type="sequence variant" id="VAR_046227" description="In dbSNP:rs189731792." evidence="11">
    <original>R</original>
    <variation>Q</variation>
    <location>
        <position position="114"/>
    </location>
</feature>
<feature type="sequence variant" id="VAR_046228" description="In dbSNP:rs771028883." evidence="11">
    <original>T</original>
    <variation>M</variation>
    <location>
        <position position="218"/>
    </location>
</feature>
<feature type="sequence variant" id="VAR_046229" description="In dbSNP:rs372345438." evidence="11">
    <original>L</original>
    <variation>M</variation>
    <location>
        <position position="226"/>
    </location>
</feature>
<feature type="sequence variant" id="VAR_046230" description="In dbSNP:rs794727802." evidence="11">
    <original>R</original>
    <variation>C</variation>
    <location>
        <position position="283"/>
    </location>
</feature>
<feature type="sequence variant" id="VAR_046231" description="In dbSNP:rs371839994." evidence="11">
    <original>S</original>
    <variation>N</variation>
    <location>
        <position position="382"/>
    </location>
</feature>
<feature type="sequence variant" id="VAR_046232" description="In dbSNP:rs143877693." evidence="11">
    <original>N</original>
    <variation>S</variation>
    <location>
        <position position="407"/>
    </location>
</feature>
<feature type="sequence variant" id="VAR_046233" description="In dbSNP:rs772179690." evidence="11">
    <original>N</original>
    <variation>D</variation>
    <location>
        <position position="418"/>
    </location>
</feature>
<feature type="sequence variant" id="VAR_046234" description="In dbSNP:rs368905425." evidence="11">
    <original>E</original>
    <variation>K</variation>
    <location>
        <position position="680"/>
    </location>
</feature>
<feature type="sequence variant" id="VAR_046235" description="In dbSNP:rs764412489." evidence="11">
    <original>P</original>
    <variation>Q</variation>
    <location>
        <position position="699"/>
    </location>
</feature>
<feature type="sequence variant" id="VAR_046236" description="In dbSNP:rs760930032." evidence="11">
    <original>Y</original>
    <variation>C</variation>
    <location>
        <position position="716"/>
    </location>
</feature>
<feature type="sequence variant" id="VAR_046237" description="In dbSNP:rs369867547." evidence="11">
    <original>G</original>
    <variation>S</variation>
    <location>
        <position position="731"/>
    </location>
</feature>
<feature type="sequence variant" id="VAR_046238" description="In dbSNP:rs200413148." evidence="11">
    <original>G</original>
    <variation>D</variation>
    <location>
        <position position="779"/>
    </location>
</feature>
<feature type="sequence variant" id="VAR_046239" description="May be a risk factor for autism; dbSNP:rs121908445." evidence="11">
    <original>I</original>
    <variation>T</variation>
    <location>
        <position position="869"/>
    </location>
</feature>
<feature type="sequence variant" id="VAR_046240" description="In dbSNP:rs759801195." evidence="11">
    <original>R</original>
    <variation>H</variation>
    <location>
        <position position="906"/>
    </location>
</feature>
<feature type="sequence variant" id="VAR_046241" description="In dbSNP:rs144003410." evidence="11">
    <original>D</original>
    <variation>N</variation>
    <location>
        <position position="1038"/>
    </location>
</feature>
<feature type="sequence variant" id="VAR_046242" description="In dbSNP:rs111599875." evidence="11">
    <original>V</original>
    <variation>A</variation>
    <location>
        <position position="1102"/>
    </location>
</feature>
<feature type="sequence variant" id="VAR_046243" description="In dbSNP:rs983036503." evidence="11">
    <original>S</original>
    <variation>G</variation>
    <location>
        <position position="1114"/>
    </location>
</feature>
<feature type="sequence variant" id="VAR_046244" description="In dbSNP:rs774709566." evidence="11">
    <original>R</original>
    <variation>H</variation>
    <location>
        <position position="1119"/>
    </location>
</feature>
<feature type="sequence variant" id="VAR_046245" description="In dbSNP:rs781236853." evidence="11">
    <original>D</original>
    <variation>H</variation>
    <location>
        <position position="1129"/>
    </location>
</feature>
<feature type="sequence variant" id="VAR_046246" description="In dbSNP:rs761684414." evidence="11">
    <original>A</original>
    <variation>T</variation>
    <location>
        <position position="1227"/>
    </location>
</feature>
<feature type="sequence variant" id="VAR_046247" description="In dbSNP:rs767821521." evidence="11">
    <original>I</original>
    <variation>T</variation>
    <location>
        <position position="1253"/>
    </location>
</feature>
<feature type="sequence variant" id="VAR_046248" description="In dbSNP:rs760047247." evidence="11">
    <original>T</original>
    <variation>I</variation>
    <location>
        <position position="1278"/>
    </location>
</feature>
<feature type="strand" evidence="18">
    <location>
        <begin position="37"/>
        <end position="40"/>
    </location>
</feature>
<feature type="helix" evidence="18">
    <location>
        <begin position="45"/>
        <end position="47"/>
    </location>
</feature>
<feature type="strand" evidence="18">
    <location>
        <begin position="48"/>
        <end position="51"/>
    </location>
</feature>
<feature type="helix" evidence="18">
    <location>
        <begin position="56"/>
        <end position="58"/>
    </location>
</feature>
<feature type="helix" evidence="18">
    <location>
        <begin position="60"/>
        <end position="62"/>
    </location>
</feature>
<feature type="strand" evidence="18">
    <location>
        <begin position="72"/>
        <end position="74"/>
    </location>
</feature>
<feature type="strand" evidence="18">
    <location>
        <begin position="85"/>
        <end position="101"/>
    </location>
</feature>
<feature type="strand" evidence="18">
    <location>
        <begin position="110"/>
        <end position="123"/>
    </location>
</feature>
<feature type="strand" evidence="18">
    <location>
        <begin position="140"/>
        <end position="143"/>
    </location>
</feature>
<feature type="strand" evidence="18">
    <location>
        <begin position="146"/>
        <end position="166"/>
    </location>
</feature>
<feature type="strand" evidence="18">
    <location>
        <begin position="174"/>
        <end position="181"/>
    </location>
</feature>
<dbReference type="EMBL" id="AF193613">
    <property type="protein sequence ID" value="AAF25199.1"/>
    <property type="molecule type" value="mRNA"/>
</dbReference>
<dbReference type="EMBL" id="AF319045">
    <property type="protein sequence ID" value="AAK34932.1"/>
    <property type="molecule type" value="mRNA"/>
</dbReference>
<dbReference type="EMBL" id="AF318292">
    <property type="protein sequence ID" value="AAK49902.1"/>
    <property type="molecule type" value="Genomic_DNA"/>
</dbReference>
<dbReference type="EMBL" id="AF318298">
    <property type="protein sequence ID" value="AAK49903.1"/>
    <property type="molecule type" value="Genomic_DNA"/>
</dbReference>
<dbReference type="EMBL" id="AB020675">
    <property type="protein sequence ID" value="BAA74891.1"/>
    <property type="status" value="ALT_INIT"/>
    <property type="molecule type" value="mRNA"/>
</dbReference>
<dbReference type="EMBL" id="CR933671">
    <property type="protein sequence ID" value="CAI45967.1"/>
    <property type="molecule type" value="mRNA"/>
</dbReference>
<dbReference type="EMBL" id="CH471146">
    <property type="protein sequence ID" value="EAW80084.1"/>
    <property type="molecule type" value="Genomic_DNA"/>
</dbReference>
<dbReference type="EMBL" id="BC093780">
    <property type="protein sequence ID" value="AAH93780.1"/>
    <property type="molecule type" value="mRNA"/>
</dbReference>
<dbReference type="EMBL" id="BC113373">
    <property type="protein sequence ID" value="AAI13374.1"/>
    <property type="molecule type" value="mRNA"/>
</dbReference>
<dbReference type="CCDS" id="CCDS5889.1">
    <molecule id="Q9UHC6-1"/>
</dbReference>
<dbReference type="RefSeq" id="NP_054860.1">
    <molecule id="Q9UHC6-1"/>
    <property type="nucleotide sequence ID" value="NM_014141.6"/>
</dbReference>
<dbReference type="PDB" id="5Y4M">
    <property type="method" value="X-ray"/>
    <property type="resolution" value="1.31 A"/>
    <property type="chains" value="A=35-181"/>
</dbReference>
<dbReference type="PDBsum" id="5Y4M"/>
<dbReference type="SASBDB" id="Q9UHC6"/>
<dbReference type="SMR" id="Q9UHC6"/>
<dbReference type="BioGRID" id="117510">
    <property type="interactions" value="16"/>
</dbReference>
<dbReference type="FunCoup" id="Q9UHC6">
    <property type="interactions" value="638"/>
</dbReference>
<dbReference type="IntAct" id="Q9UHC6">
    <property type="interactions" value="14"/>
</dbReference>
<dbReference type="MINT" id="Q9UHC6"/>
<dbReference type="STRING" id="9606.ENSP00000354778"/>
<dbReference type="GlyCosmos" id="Q9UHC6">
    <property type="glycosylation" value="12 sites, No reported glycans"/>
</dbReference>
<dbReference type="GlyGen" id="Q9UHC6">
    <property type="glycosylation" value="12 sites"/>
</dbReference>
<dbReference type="iPTMnet" id="Q9UHC6"/>
<dbReference type="PhosphoSitePlus" id="Q9UHC6"/>
<dbReference type="SwissPalm" id="Q9UHC6"/>
<dbReference type="BioMuta" id="CNTNAP2"/>
<dbReference type="DMDM" id="17433089"/>
<dbReference type="jPOST" id="Q9UHC6"/>
<dbReference type="MassIVE" id="Q9UHC6"/>
<dbReference type="PaxDb" id="9606-ENSP00000354778"/>
<dbReference type="PeptideAtlas" id="Q9UHC6"/>
<dbReference type="ProteomicsDB" id="84311">
    <molecule id="Q9UHC6-1"/>
</dbReference>
<dbReference type="ProteomicsDB" id="84312">
    <molecule id="Q9UHC6-2"/>
</dbReference>
<dbReference type="Pumba" id="Q9UHC6"/>
<dbReference type="ABCD" id="Q9UHC6">
    <property type="antibodies" value="1 sequenced antibody"/>
</dbReference>
<dbReference type="Antibodypedia" id="682">
    <property type="antibodies" value="302 antibodies from 33 providers"/>
</dbReference>
<dbReference type="DNASU" id="26047"/>
<dbReference type="Ensembl" id="ENST00000361727.8">
    <molecule id="Q9UHC6-1"/>
    <property type="protein sequence ID" value="ENSP00000354778.3"/>
    <property type="gene ID" value="ENSG00000174469.23"/>
</dbReference>
<dbReference type="Ensembl" id="ENST00000463592.3">
    <molecule id="Q9UHC6-2"/>
    <property type="protein sequence ID" value="ENSP00000486292.1"/>
    <property type="gene ID" value="ENSG00000174469.23"/>
</dbReference>
<dbReference type="Ensembl" id="ENST00000613345.2">
    <molecule id="Q9UHC6-2"/>
    <property type="protein sequence ID" value="ENSP00000481057.1"/>
    <property type="gene ID" value="ENSG00000278728.2"/>
</dbReference>
<dbReference type="GeneID" id="26047"/>
<dbReference type="KEGG" id="hsa:26047"/>
<dbReference type="MANE-Select" id="ENST00000361727.8">
    <property type="protein sequence ID" value="ENSP00000354778.3"/>
    <property type="RefSeq nucleotide sequence ID" value="NM_014141.6"/>
    <property type="RefSeq protein sequence ID" value="NP_054860.1"/>
</dbReference>
<dbReference type="UCSC" id="uc003weu.3">
    <molecule id="Q9UHC6-1"/>
    <property type="organism name" value="human"/>
</dbReference>
<dbReference type="AGR" id="HGNC:13830"/>
<dbReference type="CTD" id="26047"/>
<dbReference type="DisGeNET" id="26047"/>
<dbReference type="GeneCards" id="CNTNAP2"/>
<dbReference type="HGNC" id="HGNC:13830">
    <property type="gene designation" value="CNTNAP2"/>
</dbReference>
<dbReference type="HPA" id="ENSG00000174469">
    <property type="expression patterns" value="Group enriched (brain, retina)"/>
</dbReference>
<dbReference type="MalaCards" id="CNTNAP2"/>
<dbReference type="MIM" id="604569">
    <property type="type" value="gene"/>
</dbReference>
<dbReference type="MIM" id="610042">
    <property type="type" value="phenotype"/>
</dbReference>
<dbReference type="MIM" id="612100">
    <property type="type" value="phenotype"/>
</dbReference>
<dbReference type="neXtProt" id="NX_Q9UHC6"/>
<dbReference type="OpenTargets" id="ENSG00000174469"/>
<dbReference type="Orphanet" id="163681">
    <property type="disease" value="CNTNAP2-related developmental and epileptic encephalopathy"/>
</dbReference>
<dbReference type="PharmGKB" id="PA26692"/>
<dbReference type="VEuPathDB" id="HostDB:ENSG00000174469"/>
<dbReference type="eggNOG" id="KOG3516">
    <property type="taxonomic scope" value="Eukaryota"/>
</dbReference>
<dbReference type="GeneTree" id="ENSGT00940000154516"/>
<dbReference type="HOGENOM" id="CLU_003504_1_0_1"/>
<dbReference type="InParanoid" id="Q9UHC6"/>
<dbReference type="OMA" id="SRVQFNH"/>
<dbReference type="OrthoDB" id="26719at2759"/>
<dbReference type="PAN-GO" id="Q9UHC6">
    <property type="GO annotations" value="0 GO annotations based on evolutionary models"/>
</dbReference>
<dbReference type="PhylomeDB" id="Q9UHC6"/>
<dbReference type="TreeFam" id="TF321823"/>
<dbReference type="PathwayCommons" id="Q9UHC6"/>
<dbReference type="SignaLink" id="Q9UHC6"/>
<dbReference type="SIGNOR" id="Q9UHC6"/>
<dbReference type="BioGRID-ORCS" id="26047">
    <property type="hits" value="11 hits in 1151 CRISPR screens"/>
</dbReference>
<dbReference type="CD-CODE" id="FB4E32DD">
    <property type="entry name" value="Presynaptic clusters and postsynaptic densities"/>
</dbReference>
<dbReference type="ChiTaRS" id="CNTNAP2">
    <property type="organism name" value="human"/>
</dbReference>
<dbReference type="GeneWiki" id="CNTNAP2"/>
<dbReference type="GenomeRNAi" id="26047"/>
<dbReference type="Pharos" id="Q9UHC6">
    <property type="development level" value="Tbio"/>
</dbReference>
<dbReference type="PRO" id="PR:Q9UHC6"/>
<dbReference type="Proteomes" id="UP000005640">
    <property type="component" value="Chromosome 7"/>
</dbReference>
<dbReference type="RNAct" id="Q9UHC6">
    <property type="molecule type" value="protein"/>
</dbReference>
<dbReference type="Bgee" id="ENSG00000174469">
    <property type="expression patterns" value="Expressed in corpus callosum and 99 other cell types or tissues"/>
</dbReference>
<dbReference type="ExpressionAtlas" id="Q9UHC6">
    <property type="expression patterns" value="baseline and differential"/>
</dbReference>
<dbReference type="GO" id="GO:0030673">
    <property type="term" value="C:axolemma"/>
    <property type="evidence" value="ECO:0000314"/>
    <property type="project" value="BHF-UCL"/>
</dbReference>
<dbReference type="GO" id="GO:0030424">
    <property type="term" value="C:axon"/>
    <property type="evidence" value="ECO:0000303"/>
    <property type="project" value="BHF-UCL"/>
</dbReference>
<dbReference type="GO" id="GO:0009986">
    <property type="term" value="C:cell surface"/>
    <property type="evidence" value="ECO:0000314"/>
    <property type="project" value="BHF-UCL"/>
</dbReference>
<dbReference type="GO" id="GO:0030425">
    <property type="term" value="C:dendrite"/>
    <property type="evidence" value="ECO:0000303"/>
    <property type="project" value="BHF-UCL"/>
</dbReference>
<dbReference type="GO" id="GO:0005769">
    <property type="term" value="C:early endosome"/>
    <property type="evidence" value="ECO:0000314"/>
    <property type="project" value="BHF-UCL"/>
</dbReference>
<dbReference type="GO" id="GO:0098982">
    <property type="term" value="C:GABA-ergic synapse"/>
    <property type="evidence" value="ECO:0007669"/>
    <property type="project" value="Ensembl"/>
</dbReference>
<dbReference type="GO" id="GO:0098978">
    <property type="term" value="C:glutamatergic synapse"/>
    <property type="evidence" value="ECO:0007669"/>
    <property type="project" value="Ensembl"/>
</dbReference>
<dbReference type="GO" id="GO:0005794">
    <property type="term" value="C:Golgi apparatus"/>
    <property type="evidence" value="ECO:0000314"/>
    <property type="project" value="BHF-UCL"/>
</dbReference>
<dbReference type="GO" id="GO:0044224">
    <property type="term" value="C:juxtaparanode region of axon"/>
    <property type="evidence" value="ECO:0000250"/>
    <property type="project" value="BHF-UCL"/>
</dbReference>
<dbReference type="GO" id="GO:0016020">
    <property type="term" value="C:membrane"/>
    <property type="evidence" value="ECO:0000314"/>
    <property type="project" value="BHF-UCL"/>
</dbReference>
<dbReference type="GO" id="GO:0043025">
    <property type="term" value="C:neuronal cell body"/>
    <property type="evidence" value="ECO:0000303"/>
    <property type="project" value="BHF-UCL"/>
</dbReference>
<dbReference type="GO" id="GO:0033010">
    <property type="term" value="C:paranodal junction"/>
    <property type="evidence" value="ECO:0007669"/>
    <property type="project" value="UniProtKB-SubCell"/>
</dbReference>
<dbReference type="GO" id="GO:0033270">
    <property type="term" value="C:paranode region of axon"/>
    <property type="evidence" value="ECO:0007669"/>
    <property type="project" value="Ensembl"/>
</dbReference>
<dbReference type="GO" id="GO:0043204">
    <property type="term" value="C:perikaryon"/>
    <property type="evidence" value="ECO:0000303"/>
    <property type="project" value="BHF-UCL"/>
</dbReference>
<dbReference type="GO" id="GO:0042734">
    <property type="term" value="C:presynaptic membrane"/>
    <property type="evidence" value="ECO:0007669"/>
    <property type="project" value="Ensembl"/>
</dbReference>
<dbReference type="GO" id="GO:0008076">
    <property type="term" value="C:voltage-gated potassium channel complex"/>
    <property type="evidence" value="ECO:0000314"/>
    <property type="project" value="BHF-UCL"/>
</dbReference>
<dbReference type="GO" id="GO:0019899">
    <property type="term" value="F:enzyme binding"/>
    <property type="evidence" value="ECO:0000353"/>
    <property type="project" value="BHF-UCL"/>
</dbReference>
<dbReference type="GO" id="GO:0002020">
    <property type="term" value="F:protease binding"/>
    <property type="evidence" value="ECO:0007669"/>
    <property type="project" value="Ensembl"/>
</dbReference>
<dbReference type="GO" id="GO:0044325">
    <property type="term" value="F:transmembrane transporter binding"/>
    <property type="evidence" value="ECO:0007669"/>
    <property type="project" value="Ensembl"/>
</dbReference>
<dbReference type="GO" id="GO:0030534">
    <property type="term" value="P:adult behavior"/>
    <property type="evidence" value="ECO:0000315"/>
    <property type="project" value="BHF-UCL"/>
</dbReference>
<dbReference type="GO" id="GO:0007420">
    <property type="term" value="P:brain development"/>
    <property type="evidence" value="ECO:0000304"/>
    <property type="project" value="BHF-UCL"/>
</dbReference>
<dbReference type="GO" id="GO:0007155">
    <property type="term" value="P:cell adhesion"/>
    <property type="evidence" value="ECO:0007669"/>
    <property type="project" value="UniProtKB-KW"/>
</dbReference>
<dbReference type="GO" id="GO:0008283">
    <property type="term" value="P:cell population proliferation"/>
    <property type="evidence" value="ECO:0000314"/>
    <property type="project" value="MGI"/>
</dbReference>
<dbReference type="GO" id="GO:0021987">
    <property type="term" value="P:cerebral cortex development"/>
    <property type="evidence" value="ECO:0000270"/>
    <property type="project" value="BHF-UCL"/>
</dbReference>
<dbReference type="GO" id="GO:0045163">
    <property type="term" value="P:clustering of voltage-gated potassium channels"/>
    <property type="evidence" value="ECO:0000250"/>
    <property type="project" value="BHF-UCL"/>
</dbReference>
<dbReference type="GO" id="GO:0007612">
    <property type="term" value="P:learning"/>
    <property type="evidence" value="ECO:0000315"/>
    <property type="project" value="BHF-UCL"/>
</dbReference>
<dbReference type="GO" id="GO:0021761">
    <property type="term" value="P:limbic system development"/>
    <property type="evidence" value="ECO:0000270"/>
    <property type="project" value="BHF-UCL"/>
</dbReference>
<dbReference type="GO" id="GO:0031175">
    <property type="term" value="P:neuron projection development"/>
    <property type="evidence" value="ECO:0000250"/>
    <property type="project" value="BHF-UCL"/>
</dbReference>
<dbReference type="GO" id="GO:0048812">
    <property type="term" value="P:neuron projection morphogenesis"/>
    <property type="evidence" value="ECO:0000250"/>
    <property type="project" value="UniProtKB"/>
</dbReference>
<dbReference type="GO" id="GO:0008038">
    <property type="term" value="P:neuron recognition"/>
    <property type="evidence" value="ECO:0000303"/>
    <property type="project" value="UniProtKB"/>
</dbReference>
<dbReference type="GO" id="GO:1903598">
    <property type="term" value="P:positive regulation of gap junction assembly"/>
    <property type="evidence" value="ECO:0000315"/>
    <property type="project" value="UniProtKB"/>
</dbReference>
<dbReference type="GO" id="GO:0060134">
    <property type="term" value="P:prepulse inhibition"/>
    <property type="evidence" value="ECO:0007669"/>
    <property type="project" value="Ensembl"/>
</dbReference>
<dbReference type="GO" id="GO:0071205">
    <property type="term" value="P:protein localization to juxtaparanode region of axon"/>
    <property type="evidence" value="ECO:0000250"/>
    <property type="project" value="BHF-UCL"/>
</dbReference>
<dbReference type="GO" id="GO:0035176">
    <property type="term" value="P:social behavior"/>
    <property type="evidence" value="ECO:0000315"/>
    <property type="project" value="BHF-UCL"/>
</dbReference>
<dbReference type="GO" id="GO:0021756">
    <property type="term" value="P:striatum development"/>
    <property type="evidence" value="ECO:0000270"/>
    <property type="project" value="BHF-UCL"/>
</dbReference>
<dbReference type="GO" id="GO:0071109">
    <property type="term" value="P:superior temporal gyrus development"/>
    <property type="evidence" value="ECO:0000270"/>
    <property type="project" value="BHF-UCL"/>
</dbReference>
<dbReference type="GO" id="GO:0021794">
    <property type="term" value="P:thalamus development"/>
    <property type="evidence" value="ECO:0000270"/>
    <property type="project" value="BHF-UCL"/>
</dbReference>
<dbReference type="GO" id="GO:0019226">
    <property type="term" value="P:transmission of nerve impulse"/>
    <property type="evidence" value="ECO:0000303"/>
    <property type="project" value="UniProtKB"/>
</dbReference>
<dbReference type="GO" id="GO:0042297">
    <property type="term" value="P:vocal learning"/>
    <property type="evidence" value="ECO:0000315"/>
    <property type="project" value="BHF-UCL"/>
</dbReference>
<dbReference type="GO" id="GO:0071625">
    <property type="term" value="P:vocalization behavior"/>
    <property type="evidence" value="ECO:0000315"/>
    <property type="project" value="BHF-UCL"/>
</dbReference>
<dbReference type="CDD" id="cd00054">
    <property type="entry name" value="EGF_CA"/>
    <property type="match status" value="2"/>
</dbReference>
<dbReference type="CDD" id="cd00057">
    <property type="entry name" value="FA58C"/>
    <property type="match status" value="1"/>
</dbReference>
<dbReference type="CDD" id="cd00110">
    <property type="entry name" value="LamG"/>
    <property type="match status" value="4"/>
</dbReference>
<dbReference type="FunFam" id="2.60.120.200:FF:000082">
    <property type="entry name" value="Contactin associated protein 1"/>
    <property type="match status" value="1"/>
</dbReference>
<dbReference type="FunFam" id="2.60.120.200:FF:000099">
    <property type="entry name" value="Contactin associated protein 1"/>
    <property type="match status" value="1"/>
</dbReference>
<dbReference type="FunFam" id="2.60.120.1000:FF:000005">
    <property type="entry name" value="Contactin associated protein-like 2"/>
    <property type="match status" value="1"/>
</dbReference>
<dbReference type="FunFam" id="2.60.120.200:FF:000088">
    <property type="entry name" value="Contactin associated protein-like 2"/>
    <property type="match status" value="1"/>
</dbReference>
<dbReference type="FunFam" id="2.60.120.260:FF:000016">
    <property type="entry name" value="Contactin-associated protein-like 4 isoform 1"/>
    <property type="match status" value="1"/>
</dbReference>
<dbReference type="FunFam" id="2.60.120.200:FF:000026">
    <property type="entry name" value="contactin-associated protein-like 4 isoform X1"/>
    <property type="match status" value="1"/>
</dbReference>
<dbReference type="FunFam" id="2.10.25.10:FF:000015">
    <property type="entry name" value="neurexin-1 isoform X1"/>
    <property type="match status" value="1"/>
</dbReference>
<dbReference type="Gene3D" id="2.60.120.1000">
    <property type="match status" value="1"/>
</dbReference>
<dbReference type="Gene3D" id="2.60.120.200">
    <property type="match status" value="4"/>
</dbReference>
<dbReference type="Gene3D" id="2.60.120.260">
    <property type="entry name" value="Galactose-binding domain-like"/>
    <property type="match status" value="1"/>
</dbReference>
<dbReference type="Gene3D" id="2.10.25.10">
    <property type="entry name" value="Laminin"/>
    <property type="match status" value="2"/>
</dbReference>
<dbReference type="InterPro" id="IPR013320">
    <property type="entry name" value="ConA-like_dom_sf"/>
</dbReference>
<dbReference type="InterPro" id="IPR000742">
    <property type="entry name" value="EGF-like_dom"/>
</dbReference>
<dbReference type="InterPro" id="IPR000421">
    <property type="entry name" value="FA58C"/>
</dbReference>
<dbReference type="InterPro" id="IPR036056">
    <property type="entry name" value="Fibrinogen-like_C"/>
</dbReference>
<dbReference type="InterPro" id="IPR002181">
    <property type="entry name" value="Fibrinogen_a/b/g_C_dom"/>
</dbReference>
<dbReference type="InterPro" id="IPR008979">
    <property type="entry name" value="Galactose-bd-like_sf"/>
</dbReference>
<dbReference type="InterPro" id="IPR001791">
    <property type="entry name" value="Laminin_G"/>
</dbReference>
<dbReference type="InterPro" id="IPR003585">
    <property type="entry name" value="Neurexin-like"/>
</dbReference>
<dbReference type="InterPro" id="IPR050372">
    <property type="entry name" value="Neurexin-related_CASP"/>
</dbReference>
<dbReference type="NCBIfam" id="NF040941">
    <property type="entry name" value="GGGWT_bact"/>
    <property type="match status" value="1"/>
</dbReference>
<dbReference type="PANTHER" id="PTHR15036:SF33">
    <property type="entry name" value="CONTACTIN-ASSOCIATED PROTEIN-LIKE 2"/>
    <property type="match status" value="1"/>
</dbReference>
<dbReference type="PANTHER" id="PTHR15036">
    <property type="entry name" value="PIKACHURIN-LIKE PROTEIN"/>
    <property type="match status" value="1"/>
</dbReference>
<dbReference type="Pfam" id="PF00754">
    <property type="entry name" value="F5_F8_type_C"/>
    <property type="match status" value="1"/>
</dbReference>
<dbReference type="Pfam" id="PF02210">
    <property type="entry name" value="Laminin_G_2"/>
    <property type="match status" value="4"/>
</dbReference>
<dbReference type="SMART" id="SM00294">
    <property type="entry name" value="4.1m"/>
    <property type="match status" value="1"/>
</dbReference>
<dbReference type="SMART" id="SM00181">
    <property type="entry name" value="EGF"/>
    <property type="match status" value="2"/>
</dbReference>
<dbReference type="SMART" id="SM00231">
    <property type="entry name" value="FA58C"/>
    <property type="match status" value="1"/>
</dbReference>
<dbReference type="SMART" id="SM00282">
    <property type="entry name" value="LamG"/>
    <property type="match status" value="4"/>
</dbReference>
<dbReference type="SUPFAM" id="SSF49899">
    <property type="entry name" value="Concanavalin A-like lectins/glucanases"/>
    <property type="match status" value="4"/>
</dbReference>
<dbReference type="SUPFAM" id="SSF57196">
    <property type="entry name" value="EGF/Laminin"/>
    <property type="match status" value="1"/>
</dbReference>
<dbReference type="SUPFAM" id="SSF56496">
    <property type="entry name" value="Fibrinogen C-terminal domain-like"/>
    <property type="match status" value="1"/>
</dbReference>
<dbReference type="SUPFAM" id="SSF49785">
    <property type="entry name" value="Galactose-binding domain-like"/>
    <property type="match status" value="1"/>
</dbReference>
<dbReference type="PROSITE" id="PS50026">
    <property type="entry name" value="EGF_3"/>
    <property type="match status" value="2"/>
</dbReference>
<dbReference type="PROSITE" id="PS01285">
    <property type="entry name" value="FA58C_1"/>
    <property type="match status" value="1"/>
</dbReference>
<dbReference type="PROSITE" id="PS01286">
    <property type="entry name" value="FA58C_2"/>
    <property type="match status" value="1"/>
</dbReference>
<dbReference type="PROSITE" id="PS50022">
    <property type="entry name" value="FA58C_3"/>
    <property type="match status" value="1"/>
</dbReference>
<dbReference type="PROSITE" id="PS51406">
    <property type="entry name" value="FIBRINOGEN_C_2"/>
    <property type="match status" value="1"/>
</dbReference>
<dbReference type="PROSITE" id="PS50025">
    <property type="entry name" value="LAM_G_DOMAIN"/>
    <property type="match status" value="4"/>
</dbReference>
<proteinExistence type="evidence at protein level"/>
<accession>Q9UHC6</accession>
<accession>D3DWG2</accession>
<accession>Q14DG2</accession>
<accession>Q52LV1</accession>
<accession>Q5H9Q7</accession>
<accession>Q9UQ12</accession>
<name>CNTP2_HUMAN</name>
<reference key="1">
    <citation type="journal article" date="1999" name="Neuron">
        <title>Caspr2, a new member of the neurexin superfamily, is localized at the juxtaparanodes of myelinated axons and associates with K+ channels.</title>
        <authorList>
            <person name="Poliak S."/>
            <person name="Gollan L."/>
            <person name="Martinez R."/>
            <person name="Custer A."/>
            <person name="Einheber S."/>
            <person name="Salzer J.L."/>
            <person name="Trimmer J.S."/>
            <person name="Shrager P."/>
            <person name="Peles E."/>
        </authorList>
    </citation>
    <scope>NUCLEOTIDE SEQUENCE [MRNA] (ISOFORM 1)</scope>
    <scope>INTERACTION WITH KCNA2</scope>
    <scope>TISSUE SPECIFICITY</scope>
    <source>
        <tissue>Brain</tissue>
    </source>
</reference>
<reference key="2">
    <citation type="journal article" date="2001" name="Genomics">
        <title>The human contactin-associated protein-like 2 gene (CNTNAP2) spans over 2 Mb of DNA at chromosome 7q35.</title>
        <authorList>
            <person name="Nakabayashi K."/>
            <person name="Scherer S.W."/>
        </authorList>
    </citation>
    <scope>NUCLEOTIDE SEQUENCE [MRNA] (ISOFORM 1)</scope>
</reference>
<reference key="3">
    <citation type="journal article" date="1998" name="DNA Res.">
        <title>Prediction of the coding sequences of unidentified human genes. XII. The complete sequences of 100 new cDNA clones from brain which code for large proteins in vitro.</title>
        <authorList>
            <person name="Nagase T."/>
            <person name="Ishikawa K."/>
            <person name="Suyama M."/>
            <person name="Kikuno R."/>
            <person name="Hirosawa M."/>
            <person name="Miyajima N."/>
            <person name="Tanaka A."/>
            <person name="Kotani H."/>
            <person name="Nomura N."/>
            <person name="Ohara O."/>
        </authorList>
    </citation>
    <scope>NUCLEOTIDE SEQUENCE [LARGE SCALE MRNA] (ISOFORM 1)</scope>
    <source>
        <tissue>Brain</tissue>
    </source>
</reference>
<reference key="4">
    <citation type="journal article" date="2007" name="BMC Genomics">
        <title>The full-ORF clone resource of the German cDNA consortium.</title>
        <authorList>
            <person name="Bechtel S."/>
            <person name="Rosenfelder H."/>
            <person name="Duda A."/>
            <person name="Schmidt C.P."/>
            <person name="Ernst U."/>
            <person name="Wellenreuther R."/>
            <person name="Mehrle A."/>
            <person name="Schuster C."/>
            <person name="Bahr A."/>
            <person name="Bloecker H."/>
            <person name="Heubner D."/>
            <person name="Hoerlein A."/>
            <person name="Michel G."/>
            <person name="Wedler H."/>
            <person name="Koehrer K."/>
            <person name="Ottenwaelder B."/>
            <person name="Poustka A."/>
            <person name="Wiemann S."/>
            <person name="Schupp I."/>
        </authorList>
    </citation>
    <scope>NUCLEOTIDE SEQUENCE [LARGE SCALE MRNA] (ISOFORM 2)</scope>
    <source>
        <tissue>Retina</tissue>
    </source>
</reference>
<reference key="5">
    <citation type="submission" date="2005-09" db="EMBL/GenBank/DDBJ databases">
        <authorList>
            <person name="Mural R.J."/>
            <person name="Istrail S."/>
            <person name="Sutton G.G."/>
            <person name="Florea L."/>
            <person name="Halpern A.L."/>
            <person name="Mobarry C.M."/>
            <person name="Lippert R."/>
            <person name="Walenz B."/>
            <person name="Shatkay H."/>
            <person name="Dew I."/>
            <person name="Miller J.R."/>
            <person name="Flanigan M.J."/>
            <person name="Edwards N.J."/>
            <person name="Bolanos R."/>
            <person name="Fasulo D."/>
            <person name="Halldorsson B.V."/>
            <person name="Hannenhalli S."/>
            <person name="Turner R."/>
            <person name="Yooseph S."/>
            <person name="Lu F."/>
            <person name="Nusskern D.R."/>
            <person name="Shue B.C."/>
            <person name="Zheng X.H."/>
            <person name="Zhong F."/>
            <person name="Delcher A.L."/>
            <person name="Huson D.H."/>
            <person name="Kravitz S.A."/>
            <person name="Mouchard L."/>
            <person name="Reinert K."/>
            <person name="Remington K.A."/>
            <person name="Clark A.G."/>
            <person name="Waterman M.S."/>
            <person name="Eichler E.E."/>
            <person name="Adams M.D."/>
            <person name="Hunkapiller M.W."/>
            <person name="Myers E.W."/>
            <person name="Venter J.C."/>
        </authorList>
    </citation>
    <scope>NUCLEOTIDE SEQUENCE [LARGE SCALE GENOMIC DNA]</scope>
</reference>
<reference key="6">
    <citation type="journal article" date="2004" name="Genome Res.">
        <title>The status, quality, and expansion of the NIH full-length cDNA project: the Mammalian Gene Collection (MGC).</title>
        <authorList>
            <consortium name="The MGC Project Team"/>
        </authorList>
    </citation>
    <scope>NUCLEOTIDE SEQUENCE [LARGE SCALE MRNA] (ISOFORM 1)</scope>
    <source>
        <tissue>Brain</tissue>
    </source>
</reference>
<reference key="7">
    <citation type="journal article" date="2006" name="N. Engl. J. Med.">
        <title>Recessive symptomatic focal epilepsy and mutant contactin-associated protein-like 2.</title>
        <authorList>
            <person name="Strauss K.A."/>
            <person name="Puffenberger E.G."/>
            <person name="Huentelman M.J."/>
            <person name="Gottlieb S."/>
            <person name="Dobrin S.E."/>
            <person name="Parod J.M."/>
            <person name="Stephan D.A."/>
            <person name="Morton D.H."/>
        </authorList>
    </citation>
    <scope>INVOLVEMENT IN PTHSL1</scope>
</reference>
<reference key="8">
    <citation type="journal article" date="2009" name="Am. J. Hum. Genet.">
        <title>CNTNAP2 and NRXN1 are mutated in autosomal-recessive Pitt-Hopkins-like mental retardation and determine the level of a common synaptic protein in Drosophila.</title>
        <authorList>
            <person name="Zweier C."/>
            <person name="de Jong E.K."/>
            <person name="Zweier M."/>
            <person name="Orrico A."/>
            <person name="Ousager L.B."/>
            <person name="Collins A.L."/>
            <person name="Bijlsma E.K."/>
            <person name="Oortveld M.A."/>
            <person name="Ekici A.B."/>
            <person name="Reis A."/>
            <person name="Schenck A."/>
            <person name="Rauch A."/>
        </authorList>
    </citation>
    <scope>INVOLVEMENT IN PTHSL1</scope>
</reference>
<reference key="9">
    <citation type="journal article" date="2020" name="Dev. Cell">
        <title>NLR-1/CASPR Anchors F-Actin to Promote Gap Junction Formation.</title>
        <authorList>
            <person name="Meng L."/>
            <person name="Yan D."/>
        </authorList>
    </citation>
    <scope>FUNCTION</scope>
</reference>
<reference key="10">
    <citation type="journal article" date="2008" name="Am. J. Hum. Genet.">
        <title>Molecular cytogenetic analysis and resequencing of contactin associated protein-like 2 in autism spectrum disorders.</title>
        <authorList>
            <person name="Bakkaloglu B."/>
            <person name="O'Roak B.J."/>
            <person name="Louvi A."/>
            <person name="Gupta A.R."/>
            <person name="Abelson J.F."/>
            <person name="Morgan T.M."/>
            <person name="Chawarska K."/>
            <person name="Klin A."/>
            <person name="Ercan-Sencicek A.G."/>
            <person name="Stillman A.A."/>
            <person name="Tanriover G."/>
            <person name="Abrahams B.S."/>
            <person name="Duvall J.A."/>
            <person name="Robbins E.M."/>
            <person name="Geschwind D.H."/>
            <person name="Biederer T."/>
            <person name="Gunel M."/>
            <person name="Lifton R.P."/>
            <person name="State M.W."/>
        </authorList>
    </citation>
    <scope>INVOLVEMENT IN AUTS15</scope>
    <scope>VARIANTS GLN-114; MET-218; MET-226; CYS-283; ASN-382; SER-407; ASP-418; LYS-680; GLN-699; CYS-716; SER-731; ASP-779; THR-869; HIS-906; ASN-1038; ALA-1102; GLY-1114; HIS-1119; HIS-1129; THR-1227; THR-1253 AND ILE-1278</scope>
    <scope>CHROMOSOMAL REARRANGEMENT</scope>
</reference>
<reference key="11">
    <citation type="journal article" date="2009" name="Sci. Signal.">
        <title>Quantitative phosphoproteomic analysis of T cell receptor signaling reveals system-wide modulation of protein-protein interactions.</title>
        <authorList>
            <person name="Mayya V."/>
            <person name="Lundgren D.H."/>
            <person name="Hwang S.-I."/>
            <person name="Rezaul K."/>
            <person name="Wu L."/>
            <person name="Eng J.K."/>
            <person name="Rodionov V."/>
            <person name="Han D.K."/>
        </authorList>
    </citation>
    <scope>IDENTIFICATION BY MASS SPECTROMETRY [LARGE SCALE ANALYSIS]</scope>
    <source>
        <tissue>Leukemic T-cell</tissue>
    </source>
</reference>
<reference key="12">
    <citation type="journal article" date="2015" name="J. Neurochem.">
        <title>CASPR2 forms a complex with GPR37 via MUPP1 but not with GPR37(R558Q), an autism spectrum disorder-related mutation.</title>
        <authorList>
            <person name="Tanabe Y."/>
            <person name="Fujita-Jimbo E."/>
            <person name="Momoi M.Y."/>
            <person name="Momoi T."/>
        </authorList>
    </citation>
    <scope>INTERACTION WITH GPR37</scope>
</reference>
<protein>
    <recommendedName>
        <fullName>Contactin-associated protein-like 2</fullName>
    </recommendedName>
    <alternativeName>
        <fullName>Cell recognition molecule Caspr2</fullName>
    </alternativeName>
</protein>